<gene>
    <name type="ordered locus">syc1015_d</name>
</gene>
<protein>
    <recommendedName>
        <fullName>D-fructose 1,6-bisphosphatase class 2/sedoheptulose 1,7-bisphosphatase</fullName>
        <shortName>FBPase class 2/SBPase</shortName>
        <ecNumber>3.1.3.11</ecNumber>
        <ecNumber>3.1.3.37</ecNumber>
    </recommendedName>
</protein>
<feature type="chain" id="PRO_0000342725" description="D-fructose 1,6-bisphosphatase class 2/sedoheptulose 1,7-bisphosphatase">
    <location>
        <begin position="1"/>
        <end position="345"/>
    </location>
</feature>
<feature type="binding site" evidence="1">
    <location>
        <position position="33"/>
    </location>
    <ligand>
        <name>Mn(2+)</name>
        <dbReference type="ChEBI" id="CHEBI:29035"/>
        <label>1</label>
    </ligand>
</feature>
<feature type="binding site" evidence="1">
    <location>
        <position position="57"/>
    </location>
    <ligand>
        <name>Mn(2+)</name>
        <dbReference type="ChEBI" id="CHEBI:29035"/>
        <label>1</label>
    </ligand>
</feature>
<feature type="binding site" evidence="1">
    <location>
        <position position="97"/>
    </location>
    <ligand>
        <name>Mn(2+)</name>
        <dbReference type="ChEBI" id="CHEBI:29035"/>
        <label>2</label>
    </ligand>
</feature>
<feature type="binding site" evidence="1">
    <location>
        <begin position="100"/>
        <end position="102"/>
    </location>
    <ligand>
        <name>substrate</name>
    </ligand>
</feature>
<feature type="binding site" evidence="1">
    <location>
        <position position="100"/>
    </location>
    <ligand>
        <name>Mn(2+)</name>
        <dbReference type="ChEBI" id="CHEBI:29035"/>
        <label>2</label>
    </ligand>
</feature>
<feature type="binding site" evidence="1">
    <location>
        <position position="131"/>
    </location>
    <ligand>
        <name>substrate</name>
    </ligand>
</feature>
<feature type="binding site" evidence="1">
    <location>
        <begin position="176"/>
        <end position="178"/>
    </location>
    <ligand>
        <name>substrate</name>
    </ligand>
</feature>
<feature type="binding site" evidence="1">
    <location>
        <begin position="198"/>
        <end position="200"/>
    </location>
    <ligand>
        <name>substrate</name>
    </ligand>
</feature>
<feature type="binding site" evidence="1">
    <location>
        <position position="225"/>
    </location>
    <ligand>
        <name>Mn(2+)</name>
        <dbReference type="ChEBI" id="CHEBI:29035"/>
        <label>2</label>
    </ligand>
</feature>
<evidence type="ECO:0000250" key="1"/>
<evidence type="ECO:0000305" key="2"/>
<name>FBSB_SYNP6</name>
<organism>
    <name type="scientific">Synechococcus sp. (strain ATCC 27144 / PCC 6301 / SAUG 1402/1)</name>
    <name type="common">Anacystis nidulans</name>
    <dbReference type="NCBI Taxonomy" id="269084"/>
    <lineage>
        <taxon>Bacteria</taxon>
        <taxon>Bacillati</taxon>
        <taxon>Cyanobacteriota</taxon>
        <taxon>Cyanophyceae</taxon>
        <taxon>Synechococcales</taxon>
        <taxon>Synechococcaceae</taxon>
        <taxon>Synechococcus</taxon>
    </lineage>
</organism>
<dbReference type="EC" id="3.1.3.11"/>
<dbReference type="EC" id="3.1.3.37"/>
<dbReference type="EMBL" id="AP008231">
    <property type="protein sequence ID" value="BAD79205.1"/>
    <property type="molecule type" value="Genomic_DNA"/>
</dbReference>
<dbReference type="SMR" id="Q5N3B5"/>
<dbReference type="KEGG" id="syc:syc1015_d"/>
<dbReference type="eggNOG" id="COG1494">
    <property type="taxonomic scope" value="Bacteria"/>
</dbReference>
<dbReference type="UniPathway" id="UPA00116"/>
<dbReference type="Proteomes" id="UP000001175">
    <property type="component" value="Chromosome"/>
</dbReference>
<dbReference type="GO" id="GO:0005829">
    <property type="term" value="C:cytosol"/>
    <property type="evidence" value="ECO:0007669"/>
    <property type="project" value="TreeGrafter"/>
</dbReference>
<dbReference type="GO" id="GO:0042132">
    <property type="term" value="F:fructose 1,6-bisphosphate 1-phosphatase activity"/>
    <property type="evidence" value="ECO:0007669"/>
    <property type="project" value="UniProtKB-EC"/>
</dbReference>
<dbReference type="GO" id="GO:0046872">
    <property type="term" value="F:metal ion binding"/>
    <property type="evidence" value="ECO:0007669"/>
    <property type="project" value="UniProtKB-KW"/>
</dbReference>
<dbReference type="GO" id="GO:0050278">
    <property type="term" value="F:sedoheptulose-bisphosphatase activity"/>
    <property type="evidence" value="ECO:0007669"/>
    <property type="project" value="UniProtKB-EC"/>
</dbReference>
<dbReference type="GO" id="GO:0030388">
    <property type="term" value="P:fructose 1,6-bisphosphate metabolic process"/>
    <property type="evidence" value="ECO:0007669"/>
    <property type="project" value="TreeGrafter"/>
</dbReference>
<dbReference type="GO" id="GO:0006094">
    <property type="term" value="P:gluconeogenesis"/>
    <property type="evidence" value="ECO:0007669"/>
    <property type="project" value="InterPro"/>
</dbReference>
<dbReference type="GO" id="GO:0006071">
    <property type="term" value="P:glycerol metabolic process"/>
    <property type="evidence" value="ECO:0007669"/>
    <property type="project" value="InterPro"/>
</dbReference>
<dbReference type="GO" id="GO:0019253">
    <property type="term" value="P:reductive pentose-phosphate cycle"/>
    <property type="evidence" value="ECO:0007669"/>
    <property type="project" value="UniProtKB-UniPathway"/>
</dbReference>
<dbReference type="CDD" id="cd01516">
    <property type="entry name" value="FBPase_glpX"/>
    <property type="match status" value="1"/>
</dbReference>
<dbReference type="FunFam" id="3.40.190.90:FF:000001">
    <property type="entry name" value="Fructose-1,6-bisphosphatase"/>
    <property type="match status" value="1"/>
</dbReference>
<dbReference type="Gene3D" id="3.40.190.90">
    <property type="match status" value="1"/>
</dbReference>
<dbReference type="Gene3D" id="3.30.540.10">
    <property type="entry name" value="Fructose-1,6-Bisphosphatase, subunit A, domain 1"/>
    <property type="match status" value="1"/>
</dbReference>
<dbReference type="InterPro" id="IPR004464">
    <property type="entry name" value="FBPase_class-2/SBPase"/>
</dbReference>
<dbReference type="NCBIfam" id="TIGR00330">
    <property type="entry name" value="glpX"/>
    <property type="match status" value="1"/>
</dbReference>
<dbReference type="PANTHER" id="PTHR30447:SF0">
    <property type="entry name" value="FRUCTOSE-1,6-BISPHOSPHATASE 1 CLASS 2-RELATED"/>
    <property type="match status" value="1"/>
</dbReference>
<dbReference type="PANTHER" id="PTHR30447">
    <property type="entry name" value="FRUCTOSE-1,6-BISPHOSPHATASE CLASS 2"/>
    <property type="match status" value="1"/>
</dbReference>
<dbReference type="Pfam" id="PF03320">
    <property type="entry name" value="FBPase_glpX"/>
    <property type="match status" value="1"/>
</dbReference>
<dbReference type="PIRSF" id="PIRSF004532">
    <property type="entry name" value="GlpX"/>
    <property type="match status" value="1"/>
</dbReference>
<dbReference type="SUPFAM" id="SSF56655">
    <property type="entry name" value="Carbohydrate phosphatase"/>
    <property type="match status" value="1"/>
</dbReference>
<comment type="function">
    <text evidence="1">Catalyzes the hydrolysis of fructose 1,6-bisphosphate (Fru 1,6-P2) and sedoheptulose 1,7-bisphosphate (Sed 1,7-P2) to fructose 6-phosphate and sedoheptulose 7-phosphate, respectively.</text>
</comment>
<comment type="catalytic activity">
    <reaction>
        <text>beta-D-fructose 1,6-bisphosphate + H2O = beta-D-fructose 6-phosphate + phosphate</text>
        <dbReference type="Rhea" id="RHEA:11064"/>
        <dbReference type="ChEBI" id="CHEBI:15377"/>
        <dbReference type="ChEBI" id="CHEBI:32966"/>
        <dbReference type="ChEBI" id="CHEBI:43474"/>
        <dbReference type="ChEBI" id="CHEBI:57634"/>
        <dbReference type="EC" id="3.1.3.11"/>
    </reaction>
</comment>
<comment type="catalytic activity">
    <reaction>
        <text>D-sedoheptulose 1,7-bisphosphate + H2O = D-sedoheptulose 7-phosphate + phosphate</text>
        <dbReference type="Rhea" id="RHEA:17461"/>
        <dbReference type="ChEBI" id="CHEBI:15377"/>
        <dbReference type="ChEBI" id="CHEBI:43474"/>
        <dbReference type="ChEBI" id="CHEBI:57483"/>
        <dbReference type="ChEBI" id="CHEBI:58335"/>
        <dbReference type="EC" id="3.1.3.37"/>
    </reaction>
</comment>
<comment type="cofactor">
    <cofactor evidence="1">
        <name>Mn(2+)</name>
        <dbReference type="ChEBI" id="CHEBI:29035"/>
    </cofactor>
</comment>
<comment type="pathway">
    <text>Carbohydrate biosynthesis; Calvin cycle.</text>
</comment>
<comment type="subunit">
    <text evidence="1">Homotetramer.</text>
</comment>
<comment type="similarity">
    <text evidence="2">Belongs to the FBPase class 2 family.</text>
</comment>
<accession>Q5N3B5</accession>
<proteinExistence type="inferred from homology"/>
<sequence>MEKTIGLEIIEVVEQAAIASARLMGKGEKNEADRVAVEAMRVRMNQVEMLGRIVIGEGERDEAPMLYIGEEVGIYRDADKRAGVPAGKLVEIDIAVDPCEGTNLCAYGQPGSMAVLAISEKGGLFAAPDFYMKKLAAPPAAKGKVDINKSATENLKILSECLDRAIDELVVVVMDRPRHKELIQEIRQAGARVRLISDGDVSAAISCGFAGTNTHALMGIGAAPEGVISAAAMRCLGGHFQGQLIYDPEVVKTGLIGESRESNIARLQEMGITDPDRVYDANELASGQEVLFAACGITPGLLMEGVRFFKGGARTQSLVISSQSRTARFVDTVHMFDDVKTVSLR</sequence>
<reference key="1">
    <citation type="journal article" date="2007" name="Photosyn. Res.">
        <title>Complete nucleotide sequence of the freshwater unicellular cyanobacterium Synechococcus elongatus PCC 6301 chromosome: gene content and organization.</title>
        <authorList>
            <person name="Sugita C."/>
            <person name="Ogata K."/>
            <person name="Shikata M."/>
            <person name="Jikuya H."/>
            <person name="Takano J."/>
            <person name="Furumichi M."/>
            <person name="Kanehisa M."/>
            <person name="Omata T."/>
            <person name="Sugiura M."/>
            <person name="Sugita M."/>
        </authorList>
    </citation>
    <scope>NUCLEOTIDE SEQUENCE [LARGE SCALE GENOMIC DNA]</scope>
    <source>
        <strain>ATCC 27144 / PCC 6301 / SAUG 1402/1</strain>
    </source>
</reference>
<keyword id="KW-0113">Calvin cycle</keyword>
<keyword id="KW-0119">Carbohydrate metabolism</keyword>
<keyword id="KW-0378">Hydrolase</keyword>
<keyword id="KW-0464">Manganese</keyword>
<keyword id="KW-0479">Metal-binding</keyword>